<gene>
    <name evidence="1" type="primary">bamC</name>
    <name type="ordered locus">VS_2304</name>
</gene>
<feature type="signal peptide" evidence="1">
    <location>
        <begin position="1"/>
        <end position="19"/>
    </location>
</feature>
<feature type="chain" id="PRO_0000417825" description="Outer membrane protein assembly factor BamC">
    <location>
        <begin position="20"/>
        <end position="348"/>
    </location>
</feature>
<feature type="lipid moiety-binding region" description="N-palmitoyl cysteine" evidence="1">
    <location>
        <position position="20"/>
    </location>
</feature>
<feature type="lipid moiety-binding region" description="S-diacylglycerol cysteine" evidence="1">
    <location>
        <position position="20"/>
    </location>
</feature>
<organism>
    <name type="scientific">Vibrio atlanticus (strain LGP32)</name>
    <name type="common">Vibrio splendidus (strain Mel32)</name>
    <dbReference type="NCBI Taxonomy" id="575788"/>
    <lineage>
        <taxon>Bacteria</taxon>
        <taxon>Pseudomonadati</taxon>
        <taxon>Pseudomonadota</taxon>
        <taxon>Gammaproteobacteria</taxon>
        <taxon>Vibrionales</taxon>
        <taxon>Vibrionaceae</taxon>
        <taxon>Vibrio</taxon>
    </lineage>
</organism>
<protein>
    <recommendedName>
        <fullName evidence="1">Outer membrane protein assembly factor BamC</fullName>
    </recommendedName>
</protein>
<dbReference type="EMBL" id="FM954972">
    <property type="protein sequence ID" value="CAV19467.1"/>
    <property type="molecule type" value="Genomic_DNA"/>
</dbReference>
<dbReference type="SMR" id="B7VIM1"/>
<dbReference type="STRING" id="575788.VS_2304"/>
<dbReference type="KEGG" id="vsp:VS_2304"/>
<dbReference type="PATRIC" id="fig|575788.5.peg.3567"/>
<dbReference type="eggNOG" id="COG3317">
    <property type="taxonomic scope" value="Bacteria"/>
</dbReference>
<dbReference type="HOGENOM" id="CLU_063217_1_0_6"/>
<dbReference type="Proteomes" id="UP000009100">
    <property type="component" value="Chromosome 1"/>
</dbReference>
<dbReference type="GO" id="GO:0009279">
    <property type="term" value="C:cell outer membrane"/>
    <property type="evidence" value="ECO:0007669"/>
    <property type="project" value="UniProtKB-SubCell"/>
</dbReference>
<dbReference type="GO" id="GO:0043165">
    <property type="term" value="P:Gram-negative-bacterium-type cell outer membrane assembly"/>
    <property type="evidence" value="ECO:0007669"/>
    <property type="project" value="UniProtKB-UniRule"/>
</dbReference>
<dbReference type="GO" id="GO:0051205">
    <property type="term" value="P:protein insertion into membrane"/>
    <property type="evidence" value="ECO:0007669"/>
    <property type="project" value="UniProtKB-UniRule"/>
</dbReference>
<dbReference type="Gene3D" id="3.30.530.50">
    <property type="match status" value="1"/>
</dbReference>
<dbReference type="Gene3D" id="3.30.310.170">
    <property type="entry name" value="Outer membrane protein assembly factor BamC"/>
    <property type="match status" value="1"/>
</dbReference>
<dbReference type="HAMAP" id="MF_00924">
    <property type="entry name" value="OM_assembly_BamC"/>
    <property type="match status" value="1"/>
</dbReference>
<dbReference type="InterPro" id="IPR014524">
    <property type="entry name" value="BamC"/>
</dbReference>
<dbReference type="InterPro" id="IPR042268">
    <property type="entry name" value="BamC_C"/>
</dbReference>
<dbReference type="InterPro" id="IPR010653">
    <property type="entry name" value="NlpB/DapX"/>
</dbReference>
<dbReference type="NCBIfam" id="NF008674">
    <property type="entry name" value="PRK11679.1"/>
    <property type="match status" value="1"/>
</dbReference>
<dbReference type="Pfam" id="PF06804">
    <property type="entry name" value="Lipoprotein_18"/>
    <property type="match status" value="1"/>
</dbReference>
<dbReference type="PIRSF" id="PIRSF026343">
    <property type="entry name" value="NlpB"/>
    <property type="match status" value="1"/>
</dbReference>
<dbReference type="PROSITE" id="PS51257">
    <property type="entry name" value="PROKAR_LIPOPROTEIN"/>
    <property type="match status" value="1"/>
</dbReference>
<name>BAMC_VIBA3</name>
<evidence type="ECO:0000255" key="1">
    <source>
        <dbReference type="HAMAP-Rule" id="MF_00924"/>
    </source>
</evidence>
<accession>B7VIM1</accession>
<reference key="1">
    <citation type="submission" date="2009-02" db="EMBL/GenBank/DDBJ databases">
        <title>Vibrio splendidus str. LGP32 complete genome.</title>
        <authorList>
            <person name="Mazel D."/>
            <person name="Le Roux F."/>
        </authorList>
    </citation>
    <scope>NUCLEOTIDE SEQUENCE [LARGE SCALE GENOMIC DNA]</scope>
    <source>
        <strain>LGP32</strain>
    </source>
</reference>
<proteinExistence type="inferred from homology"/>
<keyword id="KW-0998">Cell outer membrane</keyword>
<keyword id="KW-0449">Lipoprotein</keyword>
<keyword id="KW-0472">Membrane</keyword>
<keyword id="KW-0564">Palmitate</keyword>
<keyword id="KW-0732">Signal</keyword>
<comment type="function">
    <text evidence="1">Part of the outer membrane protein assembly complex, which is involved in assembly and insertion of beta-barrel proteins into the outer membrane.</text>
</comment>
<comment type="subunit">
    <text evidence="1">Part of the Bam complex.</text>
</comment>
<comment type="subcellular location">
    <subcellularLocation>
        <location evidence="1">Cell outer membrane</location>
        <topology evidence="1">Lipid-anchor</topology>
    </subcellularLocation>
</comment>
<comment type="similarity">
    <text evidence="1">Belongs to the BamC family.</text>
</comment>
<sequence length="348" mass="39475">MKYSHQLVIGSLAVFVLTACSGSPTQRRQAKDDFEYLETPEFSQWQLPEDAQPQFYPNFDIPSGEFSGGTGRQVDIRPPQQVLELIPGARTERQNGEVTLWLLRAEEADRVWQTAVDMLTQRNIGIREQSENDIETDWVTWVSEDEEVEIGSRYSISRFQANNRHGFKINLIDWREGSEEKPVSATNKERYNAFLTNLVMARYDADLRAEAALKAQELVKRIPISMGSDRSGFPVIIARTPYNVLWQRLPTLLPTMGFELEERNQSQGTVKAKYAAPDDEFWEEIGLQPIDLAPGTYTFLFGDLGNRTSINVTDASGKPVEEELLKSMVPVLAHVADQTKDKKEAKSE</sequence>